<feature type="chain" id="PRO_0000282613" description="N-terminal EF-hand calcium-binding protein 2">
    <location>
        <begin position="1"/>
        <end position="386"/>
    </location>
</feature>
<feature type="domain" description="EF-hand 1" evidence="4">
    <location>
        <begin position="60"/>
        <end position="95"/>
    </location>
</feature>
<feature type="domain" description="EF-hand 2" evidence="4">
    <location>
        <begin position="96"/>
        <end position="129"/>
    </location>
</feature>
<feature type="domain" description="ABM">
    <location>
        <begin position="286"/>
        <end position="375"/>
    </location>
</feature>
<feature type="coiled-coil region" evidence="3">
    <location>
        <begin position="170"/>
        <end position="201"/>
    </location>
</feature>
<feature type="binding site" evidence="4">
    <location>
        <position position="73"/>
    </location>
    <ligand>
        <name>Ca(2+)</name>
        <dbReference type="ChEBI" id="CHEBI:29108"/>
        <label>1</label>
    </ligand>
</feature>
<feature type="binding site" evidence="4">
    <location>
        <position position="75"/>
    </location>
    <ligand>
        <name>Ca(2+)</name>
        <dbReference type="ChEBI" id="CHEBI:29108"/>
        <label>1</label>
    </ligand>
</feature>
<feature type="binding site" evidence="4">
    <location>
        <position position="77"/>
    </location>
    <ligand>
        <name>Ca(2+)</name>
        <dbReference type="ChEBI" id="CHEBI:29108"/>
        <label>1</label>
    </ligand>
</feature>
<feature type="binding site" evidence="4">
    <location>
        <position position="79"/>
    </location>
    <ligand>
        <name>Ca(2+)</name>
        <dbReference type="ChEBI" id="CHEBI:29108"/>
        <label>1</label>
    </ligand>
</feature>
<feature type="binding site" evidence="4">
    <location>
        <position position="84"/>
    </location>
    <ligand>
        <name>Ca(2+)</name>
        <dbReference type="ChEBI" id="CHEBI:29108"/>
        <label>1</label>
    </ligand>
</feature>
<feature type="binding site" evidence="4">
    <location>
        <position position="107"/>
    </location>
    <ligand>
        <name>Ca(2+)</name>
        <dbReference type="ChEBI" id="CHEBI:29108"/>
        <label>2</label>
    </ligand>
</feature>
<feature type="binding site" evidence="4">
    <location>
        <position position="109"/>
    </location>
    <ligand>
        <name>Ca(2+)</name>
        <dbReference type="ChEBI" id="CHEBI:29108"/>
        <label>2</label>
    </ligand>
</feature>
<feature type="binding site" evidence="4">
    <location>
        <position position="111"/>
    </location>
    <ligand>
        <name>Ca(2+)</name>
        <dbReference type="ChEBI" id="CHEBI:29108"/>
        <label>2</label>
    </ligand>
</feature>
<feature type="binding site" evidence="4">
    <location>
        <position position="113"/>
    </location>
    <ligand>
        <name>Ca(2+)</name>
        <dbReference type="ChEBI" id="CHEBI:29108"/>
        <label>2</label>
    </ligand>
</feature>
<feature type="binding site" evidence="4">
    <location>
        <position position="118"/>
    </location>
    <ligand>
        <name>Ca(2+)</name>
        <dbReference type="ChEBI" id="CHEBI:29108"/>
        <label>2</label>
    </ligand>
</feature>
<feature type="modified residue" description="Omega-N-methylarginine" evidence="2">
    <location>
        <position position="10"/>
    </location>
</feature>
<feature type="modified residue" description="Asymmetric dimethylarginine" evidence="2">
    <location>
        <position position="42"/>
    </location>
</feature>
<feature type="splice variant" id="VSP_058936" description="In isoform 2.">
    <original>MCERAARLCRAGAHRLLREPPQQGRALGGLLRWVGARMGEPRESLAPAAPADPGPASPRGGTAVILDIFRRADKNDDGKLSLEEFQLFFADGVLNEKELEDLFHTIDSDNTNHVDTKELCD</original>
    <variation>MMMGSCPWRNSSSSLQMASLMRKNWRISFTRLTLTTPN</variation>
    <location>
        <begin position="1"/>
        <end position="121"/>
    </location>
</feature>
<feature type="sequence variant" id="VAR_048639" description="In dbSNP:rs2292323.">
    <original>G</original>
    <variation>S</variation>
    <location>
        <position position="233"/>
    </location>
</feature>
<feature type="sequence variant" id="VAR_048640" description="In dbSNP:rs2292324.">
    <original>T</original>
    <variation>S</variation>
    <location>
        <position position="235"/>
    </location>
</feature>
<feature type="sequence variant" id="VAR_048641" description="In dbSNP:rs2292329.">
    <original>Q</original>
    <variation>H</variation>
    <location>
        <position position="308"/>
    </location>
</feature>
<feature type="sequence variant" id="VAR_048642" description="In dbSNP:rs2271298.">
    <original>L</original>
    <variation>V</variation>
    <location>
        <position position="353"/>
    </location>
</feature>
<keyword id="KW-0025">Alternative splicing</keyword>
<keyword id="KW-0106">Calcium</keyword>
<keyword id="KW-1003">Cell membrane</keyword>
<keyword id="KW-0966">Cell projection</keyword>
<keyword id="KW-0175">Coiled coil</keyword>
<keyword id="KW-0963">Cytoplasm</keyword>
<keyword id="KW-0472">Membrane</keyword>
<keyword id="KW-0479">Metal-binding</keyword>
<keyword id="KW-0488">Methylation</keyword>
<keyword id="KW-1267">Proteomics identification</keyword>
<keyword id="KW-1185">Reference proteome</keyword>
<keyword id="KW-0677">Repeat</keyword>
<comment type="function">
    <text evidence="10 11">May act as a signaling scaffold protein that senses intracellular calcium. Can modulate ligand-induced internalization of ADORA2A and coupling efficiency of mGluR5/GRM5; for both receptors may regulate signaling activity such as promoting MAPK1/3 (ERK1/2) activation.</text>
</comment>
<comment type="subunit">
    <text evidence="6 7">Interacts (calcium-dependent) with ADORA2A and GRM5.</text>
</comment>
<comment type="interaction">
    <interactant intactId="EBI-950070">
        <id>Q7Z6G3</id>
    </interactant>
    <interactant intactId="EBI-2902702">
        <id>P29274</id>
        <label>ADORA2A</label>
    </interactant>
    <organismsDiffer>false</organismsDiffer>
    <experiments>6</experiments>
</comment>
<comment type="interaction">
    <interactant intactId="EBI-950070">
        <id>Q7Z6G3</id>
    </interactant>
    <interactant intactId="EBI-14039683">
        <id>P41594-1</id>
        <label>GRM5</label>
    </interactant>
    <organismsDiffer>false</organismsDiffer>
    <experiments>2</experiments>
</comment>
<comment type="interaction">
    <interactant intactId="EBI-10172876">
        <id>Q7Z6G3-2</id>
    </interactant>
    <interactant intactId="EBI-745226">
        <id>Q13155</id>
        <label>AIMP2</label>
    </interactant>
    <organismsDiffer>false</organismsDiffer>
    <experiments>3</experiments>
</comment>
<comment type="interaction">
    <interactant intactId="EBI-10172876">
        <id>Q7Z6G3-2</id>
    </interactant>
    <interactant intactId="EBI-8643161">
        <id>Q9NX04</id>
        <label>AIRIM</label>
    </interactant>
    <organismsDiffer>false</organismsDiffer>
    <experiments>6</experiments>
</comment>
<comment type="interaction">
    <interactant intactId="EBI-10172876">
        <id>Q7Z6G3-2</id>
    </interactant>
    <interactant intactId="EBI-745073">
        <id>Q9BXY8</id>
        <label>BEX2</label>
    </interactant>
    <organismsDiffer>false</organismsDiffer>
    <experiments>3</experiments>
</comment>
<comment type="interaction">
    <interactant intactId="EBI-10172876">
        <id>Q7Z6G3-2</id>
    </interactant>
    <interactant intactId="EBI-741753">
        <id>Q00994</id>
        <label>BEX3</label>
    </interactant>
    <organismsDiffer>false</organismsDiffer>
    <experiments>6</experiments>
</comment>
<comment type="interaction">
    <interactant intactId="EBI-10172876">
        <id>Q7Z6G3-2</id>
    </interactant>
    <interactant intactId="EBI-358049">
        <id>Q13895</id>
        <label>BYSL</label>
    </interactant>
    <organismsDiffer>false</organismsDiffer>
    <experiments>6</experiments>
</comment>
<comment type="interaction">
    <interactant intactId="EBI-10172876">
        <id>Q7Z6G3-2</id>
    </interactant>
    <interactant intactId="EBI-741214">
        <id>Q9UFG5</id>
        <label>C19orf25</label>
    </interactant>
    <organismsDiffer>false</organismsDiffer>
    <experiments>3</experiments>
</comment>
<comment type="interaction">
    <interactant intactId="EBI-10172876">
        <id>Q7Z6G3-2</id>
    </interactant>
    <interactant intactId="EBI-747505">
        <id>Q8TAB5</id>
        <label>C1orf216</label>
    </interactant>
    <organismsDiffer>false</organismsDiffer>
    <experiments>3</experiments>
</comment>
<comment type="interaction">
    <interactant intactId="EBI-10172876">
        <id>Q7Z6G3-2</id>
    </interactant>
    <interactant intactId="EBI-11522698">
        <id>Q8TC20-4</id>
        <label>CAGE1</label>
    </interactant>
    <organismsDiffer>false</organismsDiffer>
    <experiments>3</experiments>
</comment>
<comment type="interaction">
    <interactant intactId="EBI-10172876">
        <id>Q7Z6G3-2</id>
    </interactant>
    <interactant intactId="EBI-751319">
        <id>Q9H257</id>
        <label>CARD9</label>
    </interactant>
    <organismsDiffer>false</organismsDiffer>
    <experiments>3</experiments>
</comment>
<comment type="interaction">
    <interactant intactId="EBI-10172876">
        <id>Q7Z6G3-2</id>
    </interactant>
    <interactant intactId="EBI-10749669">
        <id>Q8IYE0</id>
        <label>CCDC146</label>
    </interactant>
    <organismsDiffer>false</organismsDiffer>
    <experiments>3</experiments>
</comment>
<comment type="interaction">
    <interactant intactId="EBI-10172876">
        <id>Q7Z6G3-2</id>
    </interactant>
    <interactant intactId="EBI-10247802">
        <id>Q8IYE0-2</id>
        <label>CCDC146</label>
    </interactant>
    <organismsDiffer>false</organismsDiffer>
    <experiments>3</experiments>
</comment>
<comment type="interaction">
    <interactant intactId="EBI-10172876">
        <id>Q7Z6G3-2</id>
    </interactant>
    <interactant intactId="EBI-295634">
        <id>Q16543</id>
        <label>CDC37</label>
    </interactant>
    <organismsDiffer>false</organismsDiffer>
    <experiments>3</experiments>
</comment>
<comment type="interaction">
    <interactant intactId="EBI-10172876">
        <id>Q7Z6G3-2</id>
    </interactant>
    <interactant intactId="EBI-745954">
        <id>Q9BU64</id>
        <label>CENPO</label>
    </interactant>
    <organismsDiffer>false</organismsDiffer>
    <experiments>3</experiments>
</comment>
<comment type="interaction">
    <interactant intactId="EBI-10172876">
        <id>Q7Z6G3-2</id>
    </interactant>
    <interactant intactId="EBI-77321">
        <id>Q9UER7</id>
        <label>DAXX</label>
    </interactant>
    <organismsDiffer>false</organismsDiffer>
    <experiments>6</experiments>
</comment>
<comment type="interaction">
    <interactant intactId="EBI-10172876">
        <id>Q7Z6G3-2</id>
    </interactant>
    <interactant intactId="EBI-742953">
        <id>Q9BY27</id>
        <label>DGCR6L</label>
    </interactant>
    <organismsDiffer>false</organismsDiffer>
    <experiments>3</experiments>
</comment>
<comment type="interaction">
    <interactant intactId="EBI-10172876">
        <id>Q7Z6G3-2</id>
    </interactant>
    <interactant intactId="EBI-10241443">
        <id>Q494R4</id>
        <label>DRC12</label>
    </interactant>
    <organismsDiffer>false</organismsDiffer>
    <experiments>3</experiments>
</comment>
<comment type="interaction">
    <interactant intactId="EBI-10172876">
        <id>Q7Z6G3-2</id>
    </interactant>
    <interactant intactId="EBI-465804">
        <id>Q96EV8</id>
        <label>DTNBP1</label>
    </interactant>
    <organismsDiffer>false</organismsDiffer>
    <experiments>3</experiments>
</comment>
<comment type="interaction">
    <interactant intactId="EBI-10172876">
        <id>Q7Z6G3-2</id>
    </interactant>
    <interactant intactId="EBI-12094038">
        <id>Q13409-3</id>
        <label>DYNC1I2</label>
    </interactant>
    <organismsDiffer>false</organismsDiffer>
    <experiments>3</experiments>
</comment>
<comment type="interaction">
    <interactant intactId="EBI-10172876">
        <id>Q7Z6G3-2</id>
    </interactant>
    <interactant intactId="EBI-2339219">
        <id>Q08426</id>
        <label>EHHADH</label>
    </interactant>
    <organismsDiffer>false</organismsDiffer>
    <experiments>3</experiments>
</comment>
<comment type="interaction">
    <interactant intactId="EBI-10172876">
        <id>Q7Z6G3-2</id>
    </interactant>
    <interactant intactId="EBI-398610">
        <id>O60573</id>
        <label>EIF4E2</label>
    </interactant>
    <organismsDiffer>false</organismsDiffer>
    <experiments>3</experiments>
</comment>
<comment type="interaction">
    <interactant intactId="EBI-10172876">
        <id>Q7Z6G3-2</id>
    </interactant>
    <interactant intactId="EBI-719941">
        <id>Q3B820</id>
        <label>FAM161A</label>
    </interactant>
    <organismsDiffer>false</organismsDiffer>
    <experiments>3</experiments>
</comment>
<comment type="interaction">
    <interactant intactId="EBI-10172876">
        <id>Q7Z6G3-2</id>
    </interactant>
    <interactant intactId="EBI-7225287">
        <id>Q96MY7</id>
        <label>FAM161B</label>
    </interactant>
    <organismsDiffer>false</organismsDiffer>
    <experiments>3</experiments>
</comment>
<comment type="interaction">
    <interactant intactId="EBI-10172876">
        <id>Q7Z6G3-2</id>
    </interactant>
    <interactant intactId="EBI-746252">
        <id>Q96CN9</id>
        <label>GCC1</label>
    </interactant>
    <organismsDiffer>false</organismsDiffer>
    <experiments>3</experiments>
</comment>
<comment type="interaction">
    <interactant intactId="EBI-10172876">
        <id>Q7Z6G3-2</id>
    </interactant>
    <interactant intactId="EBI-2514791">
        <id>Q96CS2</id>
        <label>HAUS1</label>
    </interactant>
    <organismsDiffer>false</organismsDiffer>
    <experiments>3</experiments>
</comment>
<comment type="interaction">
    <interactant intactId="EBI-10172876">
        <id>Q7Z6G3-2</id>
    </interactant>
    <interactant intactId="EBI-12035052">
        <id>A5PKX9</id>
        <label>INADL</label>
    </interactant>
    <organismsDiffer>false</organismsDiffer>
    <experiments>3</experiments>
</comment>
<comment type="interaction">
    <interactant intactId="EBI-10172876">
        <id>Q7Z6G3-2</id>
    </interactant>
    <interactant intactId="EBI-536703">
        <id>Q9NVR2</id>
        <label>INTS10</label>
    </interactant>
    <organismsDiffer>false</organismsDiffer>
    <experiments>3</experiments>
</comment>
<comment type="interaction">
    <interactant intactId="EBI-10172876">
        <id>Q7Z6G3-2</id>
    </interactant>
    <interactant intactId="EBI-1047335">
        <id>Q9H1K1</id>
        <label>ISCU</label>
    </interactant>
    <organismsDiffer>false</organismsDiffer>
    <experiments>3</experiments>
</comment>
<comment type="interaction">
    <interactant intactId="EBI-10172876">
        <id>Q7Z6G3-2</id>
    </interactant>
    <interactant intactId="EBI-2556193">
        <id>Q63ZY3</id>
        <label>KANK2</label>
    </interactant>
    <organismsDiffer>false</organismsDiffer>
    <experiments>3</experiments>
</comment>
<comment type="interaction">
    <interactant intactId="EBI-10172876">
        <id>Q7Z6G3-2</id>
    </interactant>
    <interactant intactId="EBI-740244">
        <id>Q7Z3B3</id>
        <label>KANSL1</label>
    </interactant>
    <organismsDiffer>false</organismsDiffer>
    <experiments>3</experiments>
</comment>
<comment type="interaction">
    <interactant intactId="EBI-10172876">
        <id>Q7Z6G3-2</id>
    </interactant>
    <interactant intactId="EBI-710124">
        <id>O60341</id>
        <label>KDM1A</label>
    </interactant>
    <organismsDiffer>false</organismsDiffer>
    <experiments>3</experiments>
</comment>
<comment type="interaction">
    <interactant intactId="EBI-10172876">
        <id>Q7Z6G3-2</id>
    </interactant>
    <interactant intactId="EBI-2125614">
        <id>Q9BVG8</id>
        <label>KIFC3</label>
    </interactant>
    <organismsDiffer>false</organismsDiffer>
    <experiments>3</experiments>
</comment>
<comment type="interaction">
    <interactant intactId="EBI-10172876">
        <id>Q7Z6G3-2</id>
    </interactant>
    <interactant intactId="EBI-14069005">
        <id>Q9BVG8-5</id>
        <label>KIFC3</label>
    </interactant>
    <organismsDiffer>false</organismsDiffer>
    <experiments>3</experiments>
</comment>
<comment type="interaction">
    <interactant intactId="EBI-10172876">
        <id>Q7Z6G3-2</id>
    </interactant>
    <interactant intactId="EBI-1643885">
        <id>Q6P597</id>
        <label>KLC3</label>
    </interactant>
    <organismsDiffer>false</organismsDiffer>
    <experiments>3</experiments>
</comment>
<comment type="interaction">
    <interactant intactId="EBI-10172876">
        <id>Q7Z6G3-2</id>
    </interactant>
    <interactant intactId="EBI-949319">
        <id>Q9NSK0</id>
        <label>KLC4</label>
    </interactant>
    <organismsDiffer>false</organismsDiffer>
    <experiments>6</experiments>
</comment>
<comment type="interaction">
    <interactant intactId="EBI-10172876">
        <id>Q7Z6G3-2</id>
    </interactant>
    <interactant intactId="EBI-349938">
        <id>P52292</id>
        <label>KPNA2</label>
    </interactant>
    <organismsDiffer>false</organismsDiffer>
    <experiments>3</experiments>
</comment>
<comment type="interaction">
    <interactant intactId="EBI-10172876">
        <id>Q7Z6G3-2</id>
    </interactant>
    <interactant intactId="EBI-726510">
        <id>Q96BZ8</id>
        <label>LENG1</label>
    </interactant>
    <organismsDiffer>false</organismsDiffer>
    <experiments>3</experiments>
</comment>
<comment type="interaction">
    <interactant intactId="EBI-10172876">
        <id>Q7Z6G3-2</id>
    </interactant>
    <interactant intactId="EBI-739832">
        <id>Q8TBB1</id>
        <label>LNX1</label>
    </interactant>
    <organismsDiffer>false</organismsDiffer>
    <experiments>6</experiments>
</comment>
<comment type="interaction">
    <interactant intactId="EBI-10172876">
        <id>Q7Z6G3-2</id>
    </interactant>
    <interactant intactId="EBI-10278573">
        <id>Q92552-2</id>
        <label>MRPS27</label>
    </interactant>
    <organismsDiffer>false</organismsDiffer>
    <experiments>3</experiments>
</comment>
<comment type="interaction">
    <interactant intactId="EBI-10172876">
        <id>Q7Z6G3-2</id>
    </interactant>
    <interactant intactId="EBI-11991020">
        <id>A6NI15</id>
        <label>MSGN1</label>
    </interactant>
    <organismsDiffer>false</organismsDiffer>
    <experiments>3</experiments>
</comment>
<comment type="interaction">
    <interactant intactId="EBI-10172876">
        <id>Q7Z6G3-2</id>
    </interactant>
    <interactant intactId="EBI-14083835">
        <id>O94964-4</id>
        <label>MTCL2</label>
    </interactant>
    <organismsDiffer>false</organismsDiffer>
    <experiments>3</experiments>
</comment>
<comment type="interaction">
    <interactant intactId="EBI-10172876">
        <id>Q7Z6G3-2</id>
    </interactant>
    <interactant intactId="EBI-744593">
        <id>Q96QG7</id>
        <label>MTMR9</label>
    </interactant>
    <organismsDiffer>false</organismsDiffer>
    <experiments>3</experiments>
</comment>
<comment type="interaction">
    <interactant intactId="EBI-10172876">
        <id>Q7Z6G3-2</id>
    </interactant>
    <interactant intactId="EBI-7950783">
        <id>Q96JP2</id>
        <label>MYO15B</label>
    </interactant>
    <organismsDiffer>false</organismsDiffer>
    <experiments>3</experiments>
</comment>
<comment type="interaction">
    <interactant intactId="EBI-10172876">
        <id>Q7Z6G3-2</id>
    </interactant>
    <interactant intactId="EBI-2858213">
        <id>Q86VE0</id>
        <label>MYPOP</label>
    </interactant>
    <organismsDiffer>false</organismsDiffer>
    <experiments>3</experiments>
</comment>
<comment type="interaction">
    <interactant intactId="EBI-10172876">
        <id>Q7Z6G3-2</id>
    </interactant>
    <interactant intactId="EBI-11956853">
        <id>Q8N987</id>
        <label>NECAB1</label>
    </interactant>
    <organismsDiffer>false</organismsDiffer>
    <experiments>3</experiments>
</comment>
<comment type="interaction">
    <interactant intactId="EBI-10172876">
        <id>Q7Z6G3-2</id>
    </interactant>
    <interactant intactId="EBI-10172876">
        <id>Q7Z6G3-2</id>
        <label>NECAB2</label>
    </interactant>
    <organismsDiffer>false</organismsDiffer>
    <experiments>6</experiments>
</comment>
<comment type="interaction">
    <interactant intactId="EBI-10172876">
        <id>Q7Z6G3-2</id>
    </interactant>
    <interactant intactId="EBI-740364">
        <id>Q9HC98</id>
        <label>NEK6</label>
    </interactant>
    <organismsDiffer>false</organismsDiffer>
    <experiments>3</experiments>
</comment>
<comment type="interaction">
    <interactant intactId="EBI-10172876">
        <id>Q7Z6G3-2</id>
    </interactant>
    <interactant intactId="EBI-11750983">
        <id>Q9HC98-4</id>
        <label>NEK6</label>
    </interactant>
    <organismsDiffer>false</organismsDiffer>
    <experiments>3</experiments>
</comment>
<comment type="interaction">
    <interactant intactId="EBI-10172876">
        <id>Q7Z6G3-2</id>
    </interactant>
    <interactant intactId="EBI-749003">
        <id>Q9Y221</id>
        <label>NIP7</label>
    </interactant>
    <organismsDiffer>false</organismsDiffer>
    <experiments>3</experiments>
</comment>
<comment type="interaction">
    <interactant intactId="EBI-10172876">
        <id>Q7Z6G3-2</id>
    </interactant>
    <interactant intactId="EBI-741158">
        <id>Q96HA8</id>
        <label>NTAQ1</label>
    </interactant>
    <organismsDiffer>false</organismsDiffer>
    <experiments>8</experiments>
</comment>
<comment type="interaction">
    <interactant intactId="EBI-10172876">
        <id>Q7Z6G3-2</id>
    </interactant>
    <interactant intactId="EBI-8466445">
        <id>A5D8V7</id>
        <label>ODAD3</label>
    </interactant>
    <organismsDiffer>false</organismsDiffer>
    <experiments>3</experiments>
</comment>
<comment type="interaction">
    <interactant intactId="EBI-10172876">
        <id>Q7Z6G3-2</id>
    </interactant>
    <interactant intactId="EBI-10173824">
        <id>A5D8V7-2</id>
        <label>ODAD3</label>
    </interactant>
    <organismsDiffer>false</organismsDiffer>
    <experiments>3</experiments>
</comment>
<comment type="interaction">
    <interactant intactId="EBI-10172876">
        <id>Q7Z6G3-2</id>
    </interactant>
    <interactant intactId="EBI-1046387">
        <id>Q96NG3</id>
        <label>ODAD4</label>
    </interactant>
    <organismsDiffer>false</organismsDiffer>
    <experiments>3</experiments>
</comment>
<comment type="interaction">
    <interactant intactId="EBI-10172876">
        <id>Q7Z6G3-2</id>
    </interactant>
    <interactant intactId="EBI-536879">
        <id>O43482</id>
        <label>OIP5</label>
    </interactant>
    <organismsDiffer>false</organismsDiffer>
    <experiments>6</experiments>
</comment>
<comment type="interaction">
    <interactant intactId="EBI-10172876">
        <id>Q7Z6G3-2</id>
    </interactant>
    <interactant intactId="EBI-11742977">
        <id>Q15154-3</id>
        <label>PCM1</label>
    </interactant>
    <organismsDiffer>false</organismsDiffer>
    <experiments>5</experiments>
</comment>
<comment type="interaction">
    <interactant intactId="EBI-10172876">
        <id>Q7Z6G3-2</id>
    </interactant>
    <interactant intactId="EBI-79165">
        <id>Q9NRD5</id>
        <label>PICK1</label>
    </interactant>
    <organismsDiffer>false</organismsDiffer>
    <experiments>3</experiments>
</comment>
<comment type="interaction">
    <interactant intactId="EBI-10172876">
        <id>Q7Z6G3-2</id>
    </interactant>
    <interactant intactId="EBI-1383852">
        <id>P54646</id>
        <label>PRKAA2</label>
    </interactant>
    <organismsDiffer>false</organismsDiffer>
    <experiments>3</experiments>
</comment>
<comment type="interaction">
    <interactant intactId="EBI-10172876">
        <id>Q7Z6G3-2</id>
    </interactant>
    <interactant intactId="EBI-2798416">
        <id>Q99633</id>
        <label>PRPF18</label>
    </interactant>
    <organismsDiffer>false</organismsDiffer>
    <experiments>3</experiments>
</comment>
<comment type="interaction">
    <interactant intactId="EBI-10172876">
        <id>Q7Z6G3-2</id>
    </interactant>
    <interactant intactId="EBI-11983583">
        <id>Q3MIT2</id>
        <label>PUS10</label>
    </interactant>
    <organismsDiffer>false</organismsDiffer>
    <experiments>3</experiments>
</comment>
<comment type="interaction">
    <interactant intactId="EBI-10172876">
        <id>Q7Z6G3-2</id>
    </interactant>
    <interactant intactId="EBI-743428">
        <id>Q9P2K3</id>
        <label>RCOR3</label>
    </interactant>
    <organismsDiffer>false</organismsDiffer>
    <experiments>3</experiments>
</comment>
<comment type="interaction">
    <interactant intactId="EBI-10172876">
        <id>Q7Z6G3-2</id>
    </interactant>
    <interactant intactId="EBI-1504830">
        <id>Q9P2K3-2</id>
        <label>RCOR3</label>
    </interactant>
    <organismsDiffer>false</organismsDiffer>
    <experiments>3</experiments>
</comment>
<comment type="interaction">
    <interactant intactId="EBI-10172876">
        <id>Q7Z6G3-2</id>
    </interactant>
    <interactant intactId="EBI-9091816">
        <id>Q9NPQ8-4</id>
        <label>RIC8A</label>
    </interactant>
    <organismsDiffer>false</organismsDiffer>
    <experiments>3</experiments>
</comment>
<comment type="interaction">
    <interactant intactId="EBI-10172876">
        <id>Q7Z6G3-2</id>
    </interactant>
    <interactant intactId="EBI-11984663">
        <id>Q06455-2</id>
        <label>RUNX1T1</label>
    </interactant>
    <organismsDiffer>false</organismsDiffer>
    <experiments>3</experiments>
</comment>
<comment type="interaction">
    <interactant intactId="EBI-10172876">
        <id>Q7Z6G3-2</id>
    </interactant>
    <interactant intactId="EBI-10224192">
        <id>Q06455-4</id>
        <label>RUNX1T1</label>
    </interactant>
    <organismsDiffer>false</organismsDiffer>
    <experiments>3</experiments>
</comment>
<comment type="interaction">
    <interactant intactId="EBI-10172876">
        <id>Q7Z6G3-2</id>
    </interactant>
    <interactant intactId="EBI-727004">
        <id>O00560</id>
        <label>SDCBP</label>
    </interactant>
    <organismsDiffer>false</organismsDiffer>
    <experiments>5</experiments>
</comment>
<comment type="interaction">
    <interactant intactId="EBI-10172876">
        <id>Q7Z6G3-2</id>
    </interactant>
    <interactant intactId="EBI-747035">
        <id>Q9H788</id>
        <label>SH2D4A</label>
    </interactant>
    <organismsDiffer>false</organismsDiffer>
    <experiments>6</experiments>
</comment>
<comment type="interaction">
    <interactant intactId="EBI-10172876">
        <id>Q7Z6G3-2</id>
    </interactant>
    <interactant intactId="EBI-10308083">
        <id>Q9H788-2</id>
        <label>SH2D4A</label>
    </interactant>
    <organismsDiffer>false</organismsDiffer>
    <experiments>3</experiments>
</comment>
<comment type="interaction">
    <interactant intactId="EBI-10172876">
        <id>Q7Z6G3-2</id>
    </interactant>
    <interactant intactId="EBI-358489">
        <id>Q96GM5</id>
        <label>SMARCD1</label>
    </interactant>
    <organismsDiffer>false</organismsDiffer>
    <experiments>3</experiments>
</comment>
<comment type="interaction">
    <interactant intactId="EBI-10172876">
        <id>Q7Z6G3-2</id>
    </interactant>
    <interactant intactId="EBI-296723">
        <id>O95295</id>
        <label>SNAPIN</label>
    </interactant>
    <organismsDiffer>false</organismsDiffer>
    <experiments>3</experiments>
</comment>
<comment type="interaction">
    <interactant intactId="EBI-10172876">
        <id>Q7Z6G3-2</id>
    </interactant>
    <interactant intactId="EBI-10172867">
        <id>A1L4H1</id>
        <label>SSC5D</label>
    </interactant>
    <organismsDiffer>false</organismsDiffer>
    <experiments>6</experiments>
</comment>
<comment type="interaction">
    <interactant intactId="EBI-10172876">
        <id>Q7Z6G3-2</id>
    </interactant>
    <interactant intactId="EBI-710310">
        <id>Q15560</id>
        <label>TCEA2</label>
    </interactant>
    <organismsDiffer>false</organismsDiffer>
    <experiments>3</experiments>
</comment>
<comment type="interaction">
    <interactant intactId="EBI-10172876">
        <id>Q7Z6G3-2</id>
    </interactant>
    <interactant intactId="EBI-11523345">
        <id>Q8IYF3-3</id>
        <label>TEX11</label>
    </interactant>
    <organismsDiffer>false</organismsDiffer>
    <experiments>3</experiments>
</comment>
<comment type="interaction">
    <interactant intactId="EBI-10172876">
        <id>Q7Z6G3-2</id>
    </interactant>
    <interactant intactId="EBI-10262539">
        <id>Q8IWR1</id>
        <label>TRIM59</label>
    </interactant>
    <organismsDiffer>false</organismsDiffer>
    <experiments>3</experiments>
</comment>
<comment type="interaction">
    <interactant intactId="EBI-10172876">
        <id>Q7Z6G3-2</id>
    </interactant>
    <interactant intactId="EBI-11059915">
        <id>Q8N7C3</id>
        <label>TRIML2</label>
    </interactant>
    <organismsDiffer>false</organismsDiffer>
    <experiments>4</experiments>
</comment>
<comment type="interaction">
    <interactant intactId="EBI-10172876">
        <id>Q7Z6G3-2</id>
    </interactant>
    <interactant intactId="EBI-711909">
        <id>P02766</id>
        <label>TTR</label>
    </interactant>
    <organismsDiffer>false</organismsDiffer>
    <experiments>3</experiments>
</comment>
<comment type="interaction">
    <interactant intactId="EBI-10172876">
        <id>Q7Z6G3-2</id>
    </interactant>
    <interactant intactId="EBI-739895">
        <id>Q8N6Y0</id>
        <label>USHBP1</label>
    </interactant>
    <organismsDiffer>false</organismsDiffer>
    <experiments>3</experiments>
</comment>
<comment type="interaction">
    <interactant intactId="EBI-10172876">
        <id>Q7Z6G3-2</id>
    </interactant>
    <interactant intactId="EBI-625509">
        <id>Q8N720</id>
        <label>ZNF655</label>
    </interactant>
    <organismsDiffer>false</organismsDiffer>
    <experiments>3</experiments>
</comment>
<comment type="subcellular location">
    <subcellularLocation>
        <location evidence="1 2">Cytoplasm</location>
    </subcellularLocation>
    <subcellularLocation>
        <location evidence="1">Cell projection</location>
        <location evidence="1">Dendrite</location>
    </subcellularLocation>
    <subcellularLocation>
        <location evidence="1">Cell projection</location>
        <location evidence="1">Axon</location>
    </subcellularLocation>
    <subcellularLocation>
        <location evidence="6 7">Cell membrane</location>
    </subcellularLocation>
    <text evidence="1 6 7 8">Colocalizes with ADORA2A and/or mGluR5/GRM5 at the plasma membrane (PubMed:17689978, PubMed:19694902). Found in neuronal somata (PubMed:26843217). Detected in the cytoplasm of striatal neurons, at postsynaptic sites, filling dendritic shafts and spines, and at presynaptic sites, filling axon terminals (By similarity).</text>
</comment>
<comment type="alternative products">
    <event type="alternative splicing"/>
    <isoform>
        <id>Q7Z6G3-1</id>
        <name>1</name>
        <sequence type="displayed"/>
    </isoform>
    <isoform>
        <id>Q7Z6G3-2</id>
        <name>2</name>
        <sequence type="described" ref="VSP_058936"/>
    </isoform>
</comment>
<comment type="tissue specificity">
    <text evidence="5 8">Expressed in brain. Expressed in the spinal dorsal horn with especially strong expression in lamina IIi; found in excitory synaptic boutons and in ependymal cells (at protein level).</text>
</comment>
<comment type="sequence caution" evidence="9">
    <conflict type="erroneous initiation">
        <sequence resource="EMBL-CDS" id="AAI31616"/>
    </conflict>
</comment>
<comment type="sequence caution" evidence="9">
    <conflict type="erroneous initiation">
        <sequence resource="EMBL-CDS" id="BAC86948"/>
    </conflict>
</comment>
<reference key="1">
    <citation type="submission" date="2003-05" db="EMBL/GenBank/DDBJ databases">
        <title>Cloning and characterization of human EFCBP1 and EFCBP2.</title>
        <authorList>
            <person name="Wu H."/>
            <person name="Yu L."/>
            <person name="Li D."/>
            <person name="Dang Y."/>
            <person name="Shan Y."/>
        </authorList>
    </citation>
    <scope>NUCLEOTIDE SEQUENCE [MRNA] (ISOFORM 1)</scope>
    <source>
        <tissue>Brain</tissue>
    </source>
</reference>
<reference key="2">
    <citation type="journal article" date="2004" name="Nat. Genet.">
        <title>Complete sequencing and characterization of 21,243 full-length human cDNAs.</title>
        <authorList>
            <person name="Ota T."/>
            <person name="Suzuki Y."/>
            <person name="Nishikawa T."/>
            <person name="Otsuki T."/>
            <person name="Sugiyama T."/>
            <person name="Irie R."/>
            <person name="Wakamatsu A."/>
            <person name="Hayashi K."/>
            <person name="Sato H."/>
            <person name="Nagai K."/>
            <person name="Kimura K."/>
            <person name="Makita H."/>
            <person name="Sekine M."/>
            <person name="Obayashi M."/>
            <person name="Nishi T."/>
            <person name="Shibahara T."/>
            <person name="Tanaka T."/>
            <person name="Ishii S."/>
            <person name="Yamamoto J."/>
            <person name="Saito K."/>
            <person name="Kawai Y."/>
            <person name="Isono Y."/>
            <person name="Nakamura Y."/>
            <person name="Nagahari K."/>
            <person name="Murakami K."/>
            <person name="Yasuda T."/>
            <person name="Iwayanagi T."/>
            <person name="Wagatsuma M."/>
            <person name="Shiratori A."/>
            <person name="Sudo H."/>
            <person name="Hosoiri T."/>
            <person name="Kaku Y."/>
            <person name="Kodaira H."/>
            <person name="Kondo H."/>
            <person name="Sugawara M."/>
            <person name="Takahashi M."/>
            <person name="Kanda K."/>
            <person name="Yokoi T."/>
            <person name="Furuya T."/>
            <person name="Kikkawa E."/>
            <person name="Omura Y."/>
            <person name="Abe K."/>
            <person name="Kamihara K."/>
            <person name="Katsuta N."/>
            <person name="Sato K."/>
            <person name="Tanikawa M."/>
            <person name="Yamazaki M."/>
            <person name="Ninomiya K."/>
            <person name="Ishibashi T."/>
            <person name="Yamashita H."/>
            <person name="Murakawa K."/>
            <person name="Fujimori K."/>
            <person name="Tanai H."/>
            <person name="Kimata M."/>
            <person name="Watanabe M."/>
            <person name="Hiraoka S."/>
            <person name="Chiba Y."/>
            <person name="Ishida S."/>
            <person name="Ono Y."/>
            <person name="Takiguchi S."/>
            <person name="Watanabe S."/>
            <person name="Yosida M."/>
            <person name="Hotuta T."/>
            <person name="Kusano J."/>
            <person name="Kanehori K."/>
            <person name="Takahashi-Fujii A."/>
            <person name="Hara H."/>
            <person name="Tanase T.-O."/>
            <person name="Nomura Y."/>
            <person name="Togiya S."/>
            <person name="Komai F."/>
            <person name="Hara R."/>
            <person name="Takeuchi K."/>
            <person name="Arita M."/>
            <person name="Imose N."/>
            <person name="Musashino K."/>
            <person name="Yuuki H."/>
            <person name="Oshima A."/>
            <person name="Sasaki N."/>
            <person name="Aotsuka S."/>
            <person name="Yoshikawa Y."/>
            <person name="Matsunawa H."/>
            <person name="Ichihara T."/>
            <person name="Shiohata N."/>
            <person name="Sano S."/>
            <person name="Moriya S."/>
            <person name="Momiyama H."/>
            <person name="Satoh N."/>
            <person name="Takami S."/>
            <person name="Terashima Y."/>
            <person name="Suzuki O."/>
            <person name="Nakagawa S."/>
            <person name="Senoh A."/>
            <person name="Mizoguchi H."/>
            <person name="Goto Y."/>
            <person name="Shimizu F."/>
            <person name="Wakebe H."/>
            <person name="Hishigaki H."/>
            <person name="Watanabe T."/>
            <person name="Sugiyama A."/>
            <person name="Takemoto M."/>
            <person name="Kawakami B."/>
            <person name="Yamazaki M."/>
            <person name="Watanabe K."/>
            <person name="Kumagai A."/>
            <person name="Itakura S."/>
            <person name="Fukuzumi Y."/>
            <person name="Fujimori Y."/>
            <person name="Komiyama M."/>
            <person name="Tashiro H."/>
            <person name="Tanigami A."/>
            <person name="Fujiwara T."/>
            <person name="Ono T."/>
            <person name="Yamada K."/>
            <person name="Fujii Y."/>
            <person name="Ozaki K."/>
            <person name="Hirao M."/>
            <person name="Ohmori Y."/>
            <person name="Kawabata A."/>
            <person name="Hikiji T."/>
            <person name="Kobatake N."/>
            <person name="Inagaki H."/>
            <person name="Ikema Y."/>
            <person name="Okamoto S."/>
            <person name="Okitani R."/>
            <person name="Kawakami T."/>
            <person name="Noguchi S."/>
            <person name="Itoh T."/>
            <person name="Shigeta K."/>
            <person name="Senba T."/>
            <person name="Matsumura K."/>
            <person name="Nakajima Y."/>
            <person name="Mizuno T."/>
            <person name="Morinaga M."/>
            <person name="Sasaki M."/>
            <person name="Togashi T."/>
            <person name="Oyama M."/>
            <person name="Hata H."/>
            <person name="Watanabe M."/>
            <person name="Komatsu T."/>
            <person name="Mizushima-Sugano J."/>
            <person name="Satoh T."/>
            <person name="Shirai Y."/>
            <person name="Takahashi Y."/>
            <person name="Nakagawa K."/>
            <person name="Okumura K."/>
            <person name="Nagase T."/>
            <person name="Nomura N."/>
            <person name="Kikuchi H."/>
            <person name="Masuho Y."/>
            <person name="Yamashita R."/>
            <person name="Nakai K."/>
            <person name="Yada T."/>
            <person name="Nakamura Y."/>
            <person name="Ohara O."/>
            <person name="Isogai T."/>
            <person name="Sugano S."/>
        </authorList>
    </citation>
    <scope>NUCLEOTIDE SEQUENCE [LARGE SCALE MRNA] OF 22-386 (ISOFORM 1)</scope>
    <source>
        <tissue>Subthalamic nucleus</tissue>
    </source>
</reference>
<reference key="3">
    <citation type="journal article" date="2004" name="Nature">
        <title>The sequence and analysis of duplication-rich human chromosome 16.</title>
        <authorList>
            <person name="Martin J."/>
            <person name="Han C."/>
            <person name="Gordon L.A."/>
            <person name="Terry A."/>
            <person name="Prabhakar S."/>
            <person name="She X."/>
            <person name="Xie G."/>
            <person name="Hellsten U."/>
            <person name="Chan Y.M."/>
            <person name="Altherr M."/>
            <person name="Couronne O."/>
            <person name="Aerts A."/>
            <person name="Bajorek E."/>
            <person name="Black S."/>
            <person name="Blumer H."/>
            <person name="Branscomb E."/>
            <person name="Brown N.C."/>
            <person name="Bruno W.J."/>
            <person name="Buckingham J.M."/>
            <person name="Callen D.F."/>
            <person name="Campbell C.S."/>
            <person name="Campbell M.L."/>
            <person name="Campbell E.W."/>
            <person name="Caoile C."/>
            <person name="Challacombe J.F."/>
            <person name="Chasteen L.A."/>
            <person name="Chertkov O."/>
            <person name="Chi H.C."/>
            <person name="Christensen M."/>
            <person name="Clark L.M."/>
            <person name="Cohn J.D."/>
            <person name="Denys M."/>
            <person name="Detter J.C."/>
            <person name="Dickson M."/>
            <person name="Dimitrijevic-Bussod M."/>
            <person name="Escobar J."/>
            <person name="Fawcett J.J."/>
            <person name="Flowers D."/>
            <person name="Fotopulos D."/>
            <person name="Glavina T."/>
            <person name="Gomez M."/>
            <person name="Gonzales E."/>
            <person name="Goodstein D."/>
            <person name="Goodwin L.A."/>
            <person name="Grady D.L."/>
            <person name="Grigoriev I."/>
            <person name="Groza M."/>
            <person name="Hammon N."/>
            <person name="Hawkins T."/>
            <person name="Haydu L."/>
            <person name="Hildebrand C.E."/>
            <person name="Huang W."/>
            <person name="Israni S."/>
            <person name="Jett J."/>
            <person name="Jewett P.B."/>
            <person name="Kadner K."/>
            <person name="Kimball H."/>
            <person name="Kobayashi A."/>
            <person name="Krawczyk M.-C."/>
            <person name="Leyba T."/>
            <person name="Longmire J.L."/>
            <person name="Lopez F."/>
            <person name="Lou Y."/>
            <person name="Lowry S."/>
            <person name="Ludeman T."/>
            <person name="Manohar C.F."/>
            <person name="Mark G.A."/>
            <person name="McMurray K.L."/>
            <person name="Meincke L.J."/>
            <person name="Morgan J."/>
            <person name="Moyzis R.K."/>
            <person name="Mundt M.O."/>
            <person name="Munk A.C."/>
            <person name="Nandkeshwar R.D."/>
            <person name="Pitluck S."/>
            <person name="Pollard M."/>
            <person name="Predki P."/>
            <person name="Parson-Quintana B."/>
            <person name="Ramirez L."/>
            <person name="Rash S."/>
            <person name="Retterer J."/>
            <person name="Ricke D.O."/>
            <person name="Robinson D.L."/>
            <person name="Rodriguez A."/>
            <person name="Salamov A."/>
            <person name="Saunders E.H."/>
            <person name="Scott D."/>
            <person name="Shough T."/>
            <person name="Stallings R.L."/>
            <person name="Stalvey M."/>
            <person name="Sutherland R.D."/>
            <person name="Tapia R."/>
            <person name="Tesmer J.G."/>
            <person name="Thayer N."/>
            <person name="Thompson L.S."/>
            <person name="Tice H."/>
            <person name="Torney D.C."/>
            <person name="Tran-Gyamfi M."/>
            <person name="Tsai M."/>
            <person name="Ulanovsky L.E."/>
            <person name="Ustaszewska A."/>
            <person name="Vo N."/>
            <person name="White P.S."/>
            <person name="Williams A.L."/>
            <person name="Wills P.L."/>
            <person name="Wu J.-R."/>
            <person name="Wu K."/>
            <person name="Yang J."/>
            <person name="DeJong P."/>
            <person name="Bruce D."/>
            <person name="Doggett N.A."/>
            <person name="Deaven L."/>
            <person name="Schmutz J."/>
            <person name="Grimwood J."/>
            <person name="Richardson P."/>
            <person name="Rokhsar D.S."/>
            <person name="Eichler E.E."/>
            <person name="Gilna P."/>
            <person name="Lucas S.M."/>
            <person name="Myers R.M."/>
            <person name="Rubin E.M."/>
            <person name="Pennacchio L.A."/>
        </authorList>
    </citation>
    <scope>NUCLEOTIDE SEQUENCE [LARGE SCALE GENOMIC DNA]</scope>
</reference>
<reference key="4">
    <citation type="journal article" date="2004" name="Genome Res.">
        <title>The status, quality, and expansion of the NIH full-length cDNA project: the Mammalian Gene Collection (MGC).</title>
        <authorList>
            <consortium name="The MGC Project Team"/>
        </authorList>
    </citation>
    <scope>NUCLEOTIDE SEQUENCE [LARGE SCALE MRNA] (ISOFORM 2)</scope>
    <scope>NUCLEOTIDE SEQUENCE [LARGE SCALE MRNA] OF 170-386</scope>
</reference>
<reference key="5">
    <citation type="journal article" date="2002" name="Neuroscience">
        <title>NECABs: a family of neuronal Ca(2+)-binding proteins with an unusual domain structure and a restricted expression pattern.</title>
        <authorList>
            <person name="Sugita S."/>
            <person name="Ho A."/>
            <person name="Suedhof T.C."/>
        </authorList>
    </citation>
    <scope>NUCLEOTIDE SEQUENCE [MRNA] OF 131-386</scope>
    <scope>TISSUE SPECIFICITY</scope>
    <source>
        <tissue>Brain</tissue>
    </source>
</reference>
<reference key="6">
    <citation type="submission" date="1998-06" db="EMBL/GenBank/DDBJ databases">
        <authorList>
            <person name="Yu W."/>
            <person name="Gibbs R.A."/>
        </authorList>
    </citation>
    <scope>NUCLEOTIDE SEQUENCE [LARGE SCALE MRNA] OF 131-386</scope>
    <source>
        <tissue>Brain</tissue>
    </source>
</reference>
<reference key="7">
    <citation type="journal article" date="2007" name="Mol. Cell. Neurosci.">
        <title>The neuronal Ca(2+) -binding protein 2 (NECAB2) interacts with the adenosine A(2A) receptor and modulates the cell surface expression and function of the receptor.</title>
        <authorList>
            <person name="Canela L."/>
            <person name="Lujan R."/>
            <person name="Lluis C."/>
            <person name="Burgueno J."/>
            <person name="Mallol J."/>
            <person name="Canela E.I."/>
            <person name="Franco R."/>
            <person name="Ciruela F."/>
        </authorList>
    </citation>
    <scope>FUNCTION</scope>
    <scope>INTERACTION WITH ADORA2A</scope>
    <scope>SUBCELLULAR LOCATION</scope>
</reference>
<reference key="8">
    <citation type="journal article" date="2009" name="J. Neurochem.">
        <title>The association of metabotropic glutamate receptor type 5 with the neuronal Ca2+-binding protein 2 modulates receptor function.</title>
        <authorList>
            <person name="Canela L."/>
            <person name="Fernandez-Duenas V."/>
            <person name="Albergaria C."/>
            <person name="Watanabe M."/>
            <person name="Lluis C."/>
            <person name="Mallol J."/>
            <person name="Canela E.I."/>
            <person name="Franco R."/>
            <person name="Lujan R."/>
            <person name="Ciruela F."/>
        </authorList>
    </citation>
    <scope>FUNCTION</scope>
    <scope>INTERACTION WITH GRM5</scope>
    <scope>SUBCELLULAR LOCATION</scope>
</reference>
<reference key="9">
    <citation type="journal article" date="2016" name="Brain Struct. Funct.">
        <title>Comparative anatomical distribution of neuronal calcium-binding protein (NECAB) 1 and -2 in rodent and human spinal cord.</title>
        <authorList>
            <person name="Zhang M.D."/>
            <person name="Barde S."/>
            <person name="Szodorai E."/>
            <person name="Josephson A."/>
            <person name="Mitsios N."/>
            <person name="Watanabe M."/>
            <person name="Attems J."/>
            <person name="Lubec G."/>
            <person name="Kovacs G.G."/>
            <person name="Uhlen M."/>
            <person name="Mulder J."/>
            <person name="Harkany T."/>
            <person name="Hoekfelt T."/>
        </authorList>
    </citation>
    <scope>TISSUE SPECIFICITY</scope>
    <scope>SUBCELLULAR LOCATION</scope>
</reference>
<protein>
    <recommendedName>
        <fullName>N-terminal EF-hand calcium-binding protein 2</fullName>
        <shortName>EF-hand calcium-binding protein 2</shortName>
    </recommendedName>
    <alternativeName>
        <fullName>Neuronal calcium-binding protein 2</fullName>
    </alternativeName>
    <alternativeName>
        <fullName>Synaptotagmin-interacting protein 2</fullName>
        <shortName>Stip-2</shortName>
    </alternativeName>
</protein>
<proteinExistence type="evidence at protein level"/>
<name>NECA2_HUMAN</name>
<evidence type="ECO:0000250" key="1">
    <source>
        <dbReference type="UniProtKB" id="F1LQY6"/>
    </source>
</evidence>
<evidence type="ECO:0000250" key="2">
    <source>
        <dbReference type="UniProtKB" id="Q91ZP9"/>
    </source>
</evidence>
<evidence type="ECO:0000255" key="3"/>
<evidence type="ECO:0000255" key="4">
    <source>
        <dbReference type="PROSITE-ProRule" id="PRU00448"/>
    </source>
</evidence>
<evidence type="ECO:0000269" key="5">
    <source>
    </source>
</evidence>
<evidence type="ECO:0000269" key="6">
    <source>
    </source>
</evidence>
<evidence type="ECO:0000269" key="7">
    <source>
    </source>
</evidence>
<evidence type="ECO:0000269" key="8">
    <source>
    </source>
</evidence>
<evidence type="ECO:0000305" key="9"/>
<evidence type="ECO:0000305" key="10">
    <source>
    </source>
</evidence>
<evidence type="ECO:0000305" key="11">
    <source>
    </source>
</evidence>
<dbReference type="EMBL" id="AY299331">
    <property type="protein sequence ID" value="AAP57260.1"/>
    <property type="molecule type" value="mRNA"/>
</dbReference>
<dbReference type="EMBL" id="AK127376">
    <property type="protein sequence ID" value="BAC86948.1"/>
    <property type="status" value="ALT_INIT"/>
    <property type="molecule type" value="mRNA"/>
</dbReference>
<dbReference type="EMBL" id="AC040169">
    <property type="status" value="NOT_ANNOTATED_CDS"/>
    <property type="molecule type" value="Genomic_DNA"/>
</dbReference>
<dbReference type="EMBL" id="BC016979">
    <property type="status" value="NOT_ANNOTATED_CDS"/>
    <property type="molecule type" value="mRNA"/>
</dbReference>
<dbReference type="EMBL" id="BC131615">
    <property type="protein sequence ID" value="AAI31616.1"/>
    <property type="status" value="ALT_INIT"/>
    <property type="molecule type" value="mRNA"/>
</dbReference>
<dbReference type="EMBL" id="AF193758">
    <property type="protein sequence ID" value="AAG28414.1"/>
    <property type="molecule type" value="mRNA"/>
</dbReference>
<dbReference type="EMBL" id="AF070637">
    <property type="protein sequence ID" value="AAC25392.1"/>
    <property type="molecule type" value="mRNA"/>
</dbReference>
<dbReference type="CCDS" id="CCDS10940.1">
    <molecule id="Q7Z6G3-1"/>
</dbReference>
<dbReference type="CCDS" id="CCDS82019.1">
    <molecule id="Q7Z6G3-2"/>
</dbReference>
<dbReference type="RefSeq" id="NP_001316678.1">
    <molecule id="Q7Z6G3-2"/>
    <property type="nucleotide sequence ID" value="NM_001329749.2"/>
</dbReference>
<dbReference type="RefSeq" id="NP_061938.2">
    <molecule id="Q7Z6G3-1"/>
    <property type="nucleotide sequence ID" value="NM_019065.2"/>
</dbReference>
<dbReference type="RefSeq" id="XP_047290196.1">
    <molecule id="Q7Z6G3-2"/>
    <property type="nucleotide sequence ID" value="XM_047434240.1"/>
</dbReference>
<dbReference type="RefSeq" id="XP_054236487.1">
    <molecule id="Q7Z6G3-2"/>
    <property type="nucleotide sequence ID" value="XM_054380512.1"/>
</dbReference>
<dbReference type="SMR" id="Q7Z6G3"/>
<dbReference type="BioGRID" id="120035">
    <property type="interactions" value="112"/>
</dbReference>
<dbReference type="FunCoup" id="Q7Z6G3">
    <property type="interactions" value="565"/>
</dbReference>
<dbReference type="IntAct" id="Q7Z6G3">
    <property type="interactions" value="94"/>
</dbReference>
<dbReference type="MINT" id="Q7Z6G3"/>
<dbReference type="STRING" id="9606.ENSP00000307449"/>
<dbReference type="GlyGen" id="Q7Z6G3">
    <property type="glycosylation" value="2 sites, 1 O-linked glycan (1 site)"/>
</dbReference>
<dbReference type="PhosphoSitePlus" id="Q7Z6G3"/>
<dbReference type="SwissPalm" id="Q7Z6G3"/>
<dbReference type="BioMuta" id="NECAB2"/>
<dbReference type="DMDM" id="74762441"/>
<dbReference type="MassIVE" id="Q7Z6G3"/>
<dbReference type="PaxDb" id="9606-ENSP00000307449"/>
<dbReference type="PeptideAtlas" id="Q7Z6G3"/>
<dbReference type="ProteomicsDB" id="42754"/>
<dbReference type="ProteomicsDB" id="69400"/>
<dbReference type="Antibodypedia" id="2918">
    <property type="antibodies" value="111 antibodies from 22 providers"/>
</dbReference>
<dbReference type="DNASU" id="54550"/>
<dbReference type="Ensembl" id="ENST00000305202.9">
    <molecule id="Q7Z6G3-1"/>
    <property type="protein sequence ID" value="ENSP00000307449.4"/>
    <property type="gene ID" value="ENSG00000103154.10"/>
</dbReference>
<dbReference type="Ensembl" id="ENST00000565691.5">
    <molecule id="Q7Z6G3-2"/>
    <property type="protein sequence ID" value="ENSP00000457354.1"/>
    <property type="gene ID" value="ENSG00000103154.10"/>
</dbReference>
<dbReference type="GeneID" id="54550"/>
<dbReference type="KEGG" id="hsa:54550"/>
<dbReference type="MANE-Select" id="ENST00000305202.9">
    <property type="protein sequence ID" value="ENSP00000307449.4"/>
    <property type="RefSeq nucleotide sequence ID" value="NM_019065.3"/>
    <property type="RefSeq protein sequence ID" value="NP_061938.2"/>
</dbReference>
<dbReference type="UCSC" id="uc002fhd.4">
    <molecule id="Q7Z6G3-1"/>
    <property type="organism name" value="human"/>
</dbReference>
<dbReference type="AGR" id="HGNC:23746"/>
<dbReference type="CTD" id="54550"/>
<dbReference type="DisGeNET" id="54550"/>
<dbReference type="GeneCards" id="NECAB2"/>
<dbReference type="HGNC" id="HGNC:23746">
    <property type="gene designation" value="NECAB2"/>
</dbReference>
<dbReference type="HPA" id="ENSG00000103154">
    <property type="expression patterns" value="Tissue enriched (brain)"/>
</dbReference>
<dbReference type="MIM" id="618130">
    <property type="type" value="gene"/>
</dbReference>
<dbReference type="neXtProt" id="NX_Q7Z6G3"/>
<dbReference type="OpenTargets" id="ENSG00000103154"/>
<dbReference type="PharmGKB" id="PA162397412"/>
<dbReference type="VEuPathDB" id="HostDB:ENSG00000103154"/>
<dbReference type="eggNOG" id="ENOG502QRUC">
    <property type="taxonomic scope" value="Eukaryota"/>
</dbReference>
<dbReference type="GeneTree" id="ENSGT00950000183131"/>
<dbReference type="InParanoid" id="Q7Z6G3"/>
<dbReference type="OMA" id="CKSFQHV"/>
<dbReference type="OrthoDB" id="427950at2759"/>
<dbReference type="PAN-GO" id="Q7Z6G3">
    <property type="GO annotations" value="2 GO annotations based on evolutionary models"/>
</dbReference>
<dbReference type="PhylomeDB" id="Q7Z6G3"/>
<dbReference type="TreeFam" id="TF331029"/>
<dbReference type="PathwayCommons" id="Q7Z6G3"/>
<dbReference type="SignaLink" id="Q7Z6G3"/>
<dbReference type="BioGRID-ORCS" id="54550">
    <property type="hits" value="12 hits in 1140 CRISPR screens"/>
</dbReference>
<dbReference type="GeneWiki" id="EFCBP2"/>
<dbReference type="GenomeRNAi" id="54550"/>
<dbReference type="Pharos" id="Q7Z6G3">
    <property type="development level" value="Tbio"/>
</dbReference>
<dbReference type="PRO" id="PR:Q7Z6G3"/>
<dbReference type="Proteomes" id="UP000005640">
    <property type="component" value="Chromosome 16"/>
</dbReference>
<dbReference type="RNAct" id="Q7Z6G3">
    <property type="molecule type" value="protein"/>
</dbReference>
<dbReference type="Bgee" id="ENSG00000103154">
    <property type="expression patterns" value="Expressed in nucleus accumbens and 156 other cell types or tissues"/>
</dbReference>
<dbReference type="ExpressionAtlas" id="Q7Z6G3">
    <property type="expression patterns" value="baseline and differential"/>
</dbReference>
<dbReference type="GO" id="GO:0030424">
    <property type="term" value="C:axon"/>
    <property type="evidence" value="ECO:0007669"/>
    <property type="project" value="UniProtKB-SubCell"/>
</dbReference>
<dbReference type="GO" id="GO:0005737">
    <property type="term" value="C:cytoplasm"/>
    <property type="evidence" value="ECO:0000318"/>
    <property type="project" value="GO_Central"/>
</dbReference>
<dbReference type="GO" id="GO:0030425">
    <property type="term" value="C:dendrite"/>
    <property type="evidence" value="ECO:0007669"/>
    <property type="project" value="UniProtKB-SubCell"/>
</dbReference>
<dbReference type="GO" id="GO:0005886">
    <property type="term" value="C:plasma membrane"/>
    <property type="evidence" value="ECO:0000314"/>
    <property type="project" value="UniProtKB"/>
</dbReference>
<dbReference type="GO" id="GO:0098794">
    <property type="term" value="C:postsynapse"/>
    <property type="evidence" value="ECO:0007669"/>
    <property type="project" value="Ensembl"/>
</dbReference>
<dbReference type="GO" id="GO:0098793">
    <property type="term" value="C:presynapse"/>
    <property type="evidence" value="ECO:0007669"/>
    <property type="project" value="Ensembl"/>
</dbReference>
<dbReference type="GO" id="GO:0031687">
    <property type="term" value="F:A2A adenosine receptor binding"/>
    <property type="evidence" value="ECO:0000314"/>
    <property type="project" value="UniProtKB"/>
</dbReference>
<dbReference type="GO" id="GO:0005509">
    <property type="term" value="F:calcium ion binding"/>
    <property type="evidence" value="ECO:0007669"/>
    <property type="project" value="InterPro"/>
</dbReference>
<dbReference type="GO" id="GO:0042802">
    <property type="term" value="F:identical protein binding"/>
    <property type="evidence" value="ECO:0000353"/>
    <property type="project" value="IntAct"/>
</dbReference>
<dbReference type="GO" id="GO:0031802">
    <property type="term" value="F:type 5 metabotropic glutamate receptor binding"/>
    <property type="evidence" value="ECO:0000314"/>
    <property type="project" value="UniProtKB"/>
</dbReference>
<dbReference type="GO" id="GO:1904021">
    <property type="term" value="P:negative regulation of G protein-coupled receptor internalization"/>
    <property type="evidence" value="ECO:0000314"/>
    <property type="project" value="UniProtKB"/>
</dbReference>
<dbReference type="GO" id="GO:0060168">
    <property type="term" value="P:positive regulation of adenosine receptor signaling pathway"/>
    <property type="evidence" value="ECO:0000314"/>
    <property type="project" value="UniProtKB"/>
</dbReference>
<dbReference type="GO" id="GO:0070374">
    <property type="term" value="P:positive regulation of ERK1 and ERK2 cascade"/>
    <property type="evidence" value="ECO:0000314"/>
    <property type="project" value="UniProtKB"/>
</dbReference>
<dbReference type="GO" id="GO:1900451">
    <property type="term" value="P:positive regulation of glutamate receptor signaling pathway"/>
    <property type="evidence" value="ECO:0000314"/>
    <property type="project" value="UniProtKB"/>
</dbReference>
<dbReference type="GO" id="GO:1905477">
    <property type="term" value="P:positive regulation of protein localization to membrane"/>
    <property type="evidence" value="ECO:0000314"/>
    <property type="project" value="UniProtKB"/>
</dbReference>
<dbReference type="GO" id="GO:0042984">
    <property type="term" value="P:regulation of amyloid precursor protein biosynthetic process"/>
    <property type="evidence" value="ECO:0000318"/>
    <property type="project" value="GO_Central"/>
</dbReference>
<dbReference type="CDD" id="cd00051">
    <property type="entry name" value="EFh"/>
    <property type="match status" value="1"/>
</dbReference>
<dbReference type="FunFam" id="1.10.238.10:FF:000334">
    <property type="entry name" value="N-terminal EF-hand calcium binding protein 2"/>
    <property type="match status" value="1"/>
</dbReference>
<dbReference type="FunFam" id="3.30.70.100:FF:000028">
    <property type="entry name" value="N-terminal EF-hand calcium-binding protein 2"/>
    <property type="match status" value="1"/>
</dbReference>
<dbReference type="Gene3D" id="3.30.70.100">
    <property type="match status" value="1"/>
</dbReference>
<dbReference type="Gene3D" id="1.10.238.10">
    <property type="entry name" value="EF-hand"/>
    <property type="match status" value="1"/>
</dbReference>
<dbReference type="InterPro" id="IPR007138">
    <property type="entry name" value="ABM_dom"/>
</dbReference>
<dbReference type="InterPro" id="IPR011008">
    <property type="entry name" value="Dimeric_a/b-barrel"/>
</dbReference>
<dbReference type="InterPro" id="IPR011992">
    <property type="entry name" value="EF-hand-dom_pair"/>
</dbReference>
<dbReference type="InterPro" id="IPR018247">
    <property type="entry name" value="EF_Hand_1_Ca_BS"/>
</dbReference>
<dbReference type="InterPro" id="IPR002048">
    <property type="entry name" value="EF_hand_dom"/>
</dbReference>
<dbReference type="InterPro" id="IPR039862">
    <property type="entry name" value="NECAB1/2/3"/>
</dbReference>
<dbReference type="PANTHER" id="PTHR12178">
    <property type="entry name" value="EF-HAND DOMAIN-CONTAINING PROTEIN"/>
    <property type="match status" value="1"/>
</dbReference>
<dbReference type="PANTHER" id="PTHR12178:SF2">
    <property type="entry name" value="N-TERMINAL EF-HAND CALCIUM-BINDING PROTEIN 2"/>
    <property type="match status" value="1"/>
</dbReference>
<dbReference type="Pfam" id="PF03992">
    <property type="entry name" value="ABM"/>
    <property type="match status" value="1"/>
</dbReference>
<dbReference type="Pfam" id="PF13499">
    <property type="entry name" value="EF-hand_7"/>
    <property type="match status" value="1"/>
</dbReference>
<dbReference type="SMART" id="SM00054">
    <property type="entry name" value="EFh"/>
    <property type="match status" value="2"/>
</dbReference>
<dbReference type="SUPFAM" id="SSF54909">
    <property type="entry name" value="Dimeric alpha+beta barrel"/>
    <property type="match status" value="1"/>
</dbReference>
<dbReference type="SUPFAM" id="SSF47473">
    <property type="entry name" value="EF-hand"/>
    <property type="match status" value="1"/>
</dbReference>
<dbReference type="PROSITE" id="PS51725">
    <property type="entry name" value="ABM"/>
    <property type="match status" value="1"/>
</dbReference>
<dbReference type="PROSITE" id="PS00018">
    <property type="entry name" value="EF_HAND_1"/>
    <property type="match status" value="2"/>
</dbReference>
<dbReference type="PROSITE" id="PS50222">
    <property type="entry name" value="EF_HAND_2"/>
    <property type="match status" value="2"/>
</dbReference>
<gene>
    <name type="primary">NECAB2</name>
    <name type="synonym">EFCBP2</name>
</gene>
<sequence length="386" mass="43194">MCERAARLCRAGAHRLLREPPQQGRALGGLLRWVGARMGEPRESLAPAAPADPGPASPRGGTAVILDIFRRADKNDDGKLSLEEFQLFFADGVLNEKELEDLFHTIDSDNTNHVDTKELCDYFVDHMGDYEDVLASLETLNHSVLKAMGYTKKVYEGGSNVDQFVTRFLLKETANQIQSLLSSVESAVEAIEEQTSQLRQNHIKPSHSAAQTWCGSPTPASAPNHKLMAMEQGKTLPSATEDAKEEGLEAQISRLAELIGRLESKALWFDLQQRLSDEDGTNMHLQLVRQEMAVCPEQLSEFLDSLRQYLRGTTGVRNCFHITAVRLSDGFTFVIYEFWETEEAWKRHLQSPLCKAFRHVKVDTLSQPEALSRILVPAAWCTVGRD</sequence>
<organism>
    <name type="scientific">Homo sapiens</name>
    <name type="common">Human</name>
    <dbReference type="NCBI Taxonomy" id="9606"/>
    <lineage>
        <taxon>Eukaryota</taxon>
        <taxon>Metazoa</taxon>
        <taxon>Chordata</taxon>
        <taxon>Craniata</taxon>
        <taxon>Vertebrata</taxon>
        <taxon>Euteleostomi</taxon>
        <taxon>Mammalia</taxon>
        <taxon>Eutheria</taxon>
        <taxon>Euarchontoglires</taxon>
        <taxon>Primates</taxon>
        <taxon>Haplorrhini</taxon>
        <taxon>Catarrhini</taxon>
        <taxon>Hominidae</taxon>
        <taxon>Homo</taxon>
    </lineage>
</organism>
<accession>Q7Z6G3</accession>
<accession>A2RRG3</accession>
<accession>H3BTW2</accession>
<accession>O75547</accession>
<accession>Q6ZSK0</accession>